<evidence type="ECO:0000269" key="1">
    <source>
    </source>
</evidence>
<evidence type="ECO:0000303" key="2">
    <source>
    </source>
</evidence>
<evidence type="ECO:0000305" key="3"/>
<evidence type="ECO:0000305" key="4">
    <source>
    </source>
</evidence>
<evidence type="ECO:0000312" key="5">
    <source>
        <dbReference type="EMBL" id="AAY54877.1"/>
    </source>
</evidence>
<evidence type="ECO:0000312" key="6">
    <source>
        <dbReference type="FlyBase" id="FBgn0038343"/>
    </source>
</evidence>
<evidence type="ECO:0000312" key="7">
    <source>
        <dbReference type="Proteomes" id="UP000000803"/>
    </source>
</evidence>
<sequence>MTKTTMHWLAHFQIILLCIWLMCPPSSQAIKCDTCGKECASACGTKHFRTCCFNYLRKRSDPDALRQSSNRRLIDFILLQGRALFTQELRERRHNGTLMDLGLNTYYP</sequence>
<keyword id="KW-0165">Cleavage on pair of basic residues</keyword>
<keyword id="KW-0903">Direct protein sequencing</keyword>
<keyword id="KW-1015">Disulfide bond</keyword>
<keyword id="KW-1185">Reference proteome</keyword>
<keyword id="KW-0964">Secreted</keyword>
<keyword id="KW-0732">Signal</keyword>
<accession>Q4V645</accession>
<accession>Q9VF57</accession>
<comment type="function">
    <text evidence="1">Activates the G-protein coupled receptor TrissinR in vitro, leading to increased intracellular calcium ion levels.</text>
</comment>
<comment type="subcellular location">
    <subcellularLocation>
        <location evidence="3">Secreted</location>
    </subcellularLocation>
</comment>
<comment type="mass spectrometry"/>
<gene>
    <name evidence="2" type="primary">Trissin</name>
    <name evidence="6" type="ORF">CG14871</name>
</gene>
<feature type="signal peptide" evidence="1">
    <location>
        <begin position="1"/>
        <end position="29"/>
    </location>
</feature>
<feature type="peptide" id="PRO_0000437962" description="Trissin" evidence="1">
    <location>
        <begin position="30"/>
        <end position="56"/>
    </location>
</feature>
<feature type="propeptide" id="PRO_0000437963" evidence="4">
    <location>
        <begin position="57"/>
        <end position="108"/>
    </location>
</feature>
<feature type="disulfide bond" evidence="1">
    <location>
        <begin position="32"/>
        <end position="43"/>
    </location>
</feature>
<feature type="disulfide bond" evidence="1">
    <location>
        <begin position="35"/>
        <end position="52"/>
    </location>
</feature>
<feature type="disulfide bond" evidence="1">
    <location>
        <begin position="39"/>
        <end position="51"/>
    </location>
</feature>
<name>TRISS_DROME</name>
<organism evidence="5">
    <name type="scientific">Drosophila melanogaster</name>
    <name type="common">Fruit fly</name>
    <dbReference type="NCBI Taxonomy" id="7227"/>
    <lineage>
        <taxon>Eukaryota</taxon>
        <taxon>Metazoa</taxon>
        <taxon>Ecdysozoa</taxon>
        <taxon>Arthropoda</taxon>
        <taxon>Hexapoda</taxon>
        <taxon>Insecta</taxon>
        <taxon>Pterygota</taxon>
        <taxon>Neoptera</taxon>
        <taxon>Endopterygota</taxon>
        <taxon>Diptera</taxon>
        <taxon>Brachycera</taxon>
        <taxon>Muscomorpha</taxon>
        <taxon>Ephydroidea</taxon>
        <taxon>Drosophilidae</taxon>
        <taxon>Drosophila</taxon>
        <taxon>Sophophora</taxon>
    </lineage>
</organism>
<reference evidence="7" key="1">
    <citation type="journal article" date="2000" name="Science">
        <title>The genome sequence of Drosophila melanogaster.</title>
        <authorList>
            <person name="Adams M.D."/>
            <person name="Celniker S.E."/>
            <person name="Holt R.A."/>
            <person name="Evans C.A."/>
            <person name="Gocayne J.D."/>
            <person name="Amanatides P.G."/>
            <person name="Scherer S.E."/>
            <person name="Li P.W."/>
            <person name="Hoskins R.A."/>
            <person name="Galle R.F."/>
            <person name="George R.A."/>
            <person name="Lewis S.E."/>
            <person name="Richards S."/>
            <person name="Ashburner M."/>
            <person name="Henderson S.N."/>
            <person name="Sutton G.G."/>
            <person name="Wortman J.R."/>
            <person name="Yandell M.D."/>
            <person name="Zhang Q."/>
            <person name="Chen L.X."/>
            <person name="Brandon R.C."/>
            <person name="Rogers Y.-H.C."/>
            <person name="Blazej R.G."/>
            <person name="Champe M."/>
            <person name="Pfeiffer B.D."/>
            <person name="Wan K.H."/>
            <person name="Doyle C."/>
            <person name="Baxter E.G."/>
            <person name="Helt G."/>
            <person name="Nelson C.R."/>
            <person name="Miklos G.L.G."/>
            <person name="Abril J.F."/>
            <person name="Agbayani A."/>
            <person name="An H.-J."/>
            <person name="Andrews-Pfannkoch C."/>
            <person name="Baldwin D."/>
            <person name="Ballew R.M."/>
            <person name="Basu A."/>
            <person name="Baxendale J."/>
            <person name="Bayraktaroglu L."/>
            <person name="Beasley E.M."/>
            <person name="Beeson K.Y."/>
            <person name="Benos P.V."/>
            <person name="Berman B.P."/>
            <person name="Bhandari D."/>
            <person name="Bolshakov S."/>
            <person name="Borkova D."/>
            <person name="Botchan M.R."/>
            <person name="Bouck J."/>
            <person name="Brokstein P."/>
            <person name="Brottier P."/>
            <person name="Burtis K.C."/>
            <person name="Busam D.A."/>
            <person name="Butler H."/>
            <person name="Cadieu E."/>
            <person name="Center A."/>
            <person name="Chandra I."/>
            <person name="Cherry J.M."/>
            <person name="Cawley S."/>
            <person name="Dahlke C."/>
            <person name="Davenport L.B."/>
            <person name="Davies P."/>
            <person name="de Pablos B."/>
            <person name="Delcher A."/>
            <person name="Deng Z."/>
            <person name="Mays A.D."/>
            <person name="Dew I."/>
            <person name="Dietz S.M."/>
            <person name="Dodson K."/>
            <person name="Doup L.E."/>
            <person name="Downes M."/>
            <person name="Dugan-Rocha S."/>
            <person name="Dunkov B.C."/>
            <person name="Dunn P."/>
            <person name="Durbin K.J."/>
            <person name="Evangelista C.C."/>
            <person name="Ferraz C."/>
            <person name="Ferriera S."/>
            <person name="Fleischmann W."/>
            <person name="Fosler C."/>
            <person name="Gabrielian A.E."/>
            <person name="Garg N.S."/>
            <person name="Gelbart W.M."/>
            <person name="Glasser K."/>
            <person name="Glodek A."/>
            <person name="Gong F."/>
            <person name="Gorrell J.H."/>
            <person name="Gu Z."/>
            <person name="Guan P."/>
            <person name="Harris M."/>
            <person name="Harris N.L."/>
            <person name="Harvey D.A."/>
            <person name="Heiman T.J."/>
            <person name="Hernandez J.R."/>
            <person name="Houck J."/>
            <person name="Hostin D."/>
            <person name="Houston K.A."/>
            <person name="Howland T.J."/>
            <person name="Wei M.-H."/>
            <person name="Ibegwam C."/>
            <person name="Jalali M."/>
            <person name="Kalush F."/>
            <person name="Karpen G.H."/>
            <person name="Ke Z."/>
            <person name="Kennison J.A."/>
            <person name="Ketchum K.A."/>
            <person name="Kimmel B.E."/>
            <person name="Kodira C.D."/>
            <person name="Kraft C.L."/>
            <person name="Kravitz S."/>
            <person name="Kulp D."/>
            <person name="Lai Z."/>
            <person name="Lasko P."/>
            <person name="Lei Y."/>
            <person name="Levitsky A.A."/>
            <person name="Li J.H."/>
            <person name="Li Z."/>
            <person name="Liang Y."/>
            <person name="Lin X."/>
            <person name="Liu X."/>
            <person name="Mattei B."/>
            <person name="McIntosh T.C."/>
            <person name="McLeod M.P."/>
            <person name="McPherson D."/>
            <person name="Merkulov G."/>
            <person name="Milshina N.V."/>
            <person name="Mobarry C."/>
            <person name="Morris J."/>
            <person name="Moshrefi A."/>
            <person name="Mount S.M."/>
            <person name="Moy M."/>
            <person name="Murphy B."/>
            <person name="Murphy L."/>
            <person name="Muzny D.M."/>
            <person name="Nelson D.L."/>
            <person name="Nelson D.R."/>
            <person name="Nelson K.A."/>
            <person name="Nixon K."/>
            <person name="Nusskern D.R."/>
            <person name="Pacleb J.M."/>
            <person name="Palazzolo M."/>
            <person name="Pittman G.S."/>
            <person name="Pan S."/>
            <person name="Pollard J."/>
            <person name="Puri V."/>
            <person name="Reese M.G."/>
            <person name="Reinert K."/>
            <person name="Remington K."/>
            <person name="Saunders R.D.C."/>
            <person name="Scheeler F."/>
            <person name="Shen H."/>
            <person name="Shue B.C."/>
            <person name="Siden-Kiamos I."/>
            <person name="Simpson M."/>
            <person name="Skupski M.P."/>
            <person name="Smith T.J."/>
            <person name="Spier E."/>
            <person name="Spradling A.C."/>
            <person name="Stapleton M."/>
            <person name="Strong R."/>
            <person name="Sun E."/>
            <person name="Svirskas R."/>
            <person name="Tector C."/>
            <person name="Turner R."/>
            <person name="Venter E."/>
            <person name="Wang A.H."/>
            <person name="Wang X."/>
            <person name="Wang Z.-Y."/>
            <person name="Wassarman D.A."/>
            <person name="Weinstock G.M."/>
            <person name="Weissenbach J."/>
            <person name="Williams S.M."/>
            <person name="Woodage T."/>
            <person name="Worley K.C."/>
            <person name="Wu D."/>
            <person name="Yang S."/>
            <person name="Yao Q.A."/>
            <person name="Ye J."/>
            <person name="Yeh R.-F."/>
            <person name="Zaveri J.S."/>
            <person name="Zhan M."/>
            <person name="Zhang G."/>
            <person name="Zhao Q."/>
            <person name="Zheng L."/>
            <person name="Zheng X.H."/>
            <person name="Zhong F.N."/>
            <person name="Zhong W."/>
            <person name="Zhou X."/>
            <person name="Zhu S.C."/>
            <person name="Zhu X."/>
            <person name="Smith H.O."/>
            <person name="Gibbs R.A."/>
            <person name="Myers E.W."/>
            <person name="Rubin G.M."/>
            <person name="Venter J.C."/>
        </authorList>
    </citation>
    <scope>NUCLEOTIDE SEQUENCE [LARGE SCALE GENOMIC DNA]</scope>
    <source>
        <strain evidence="7">Berkeley</strain>
    </source>
</reference>
<reference evidence="7" key="2">
    <citation type="journal article" date="2002" name="Genome Biol.">
        <title>Annotation of the Drosophila melanogaster euchromatic genome: a systematic review.</title>
        <authorList>
            <person name="Misra S."/>
            <person name="Crosby M.A."/>
            <person name="Mungall C.J."/>
            <person name="Matthews B.B."/>
            <person name="Campbell K.S."/>
            <person name="Hradecky P."/>
            <person name="Huang Y."/>
            <person name="Kaminker J.S."/>
            <person name="Millburn G.H."/>
            <person name="Prochnik S.E."/>
            <person name="Smith C.D."/>
            <person name="Tupy J.L."/>
            <person name="Whitfield E.J."/>
            <person name="Bayraktaroglu L."/>
            <person name="Berman B.P."/>
            <person name="Bettencourt B.R."/>
            <person name="Celniker S.E."/>
            <person name="de Grey A.D.N.J."/>
            <person name="Drysdale R.A."/>
            <person name="Harris N.L."/>
            <person name="Richter J."/>
            <person name="Russo S."/>
            <person name="Schroeder A.J."/>
            <person name="Shu S.Q."/>
            <person name="Stapleton M."/>
            <person name="Yamada C."/>
            <person name="Ashburner M."/>
            <person name="Gelbart W.M."/>
            <person name="Rubin G.M."/>
            <person name="Lewis S.E."/>
        </authorList>
    </citation>
    <scope>GENOME REANNOTATION</scope>
    <source>
        <strain evidence="7">Berkeley</strain>
    </source>
</reference>
<reference evidence="5" key="3">
    <citation type="submission" date="2005-05" db="EMBL/GenBank/DDBJ databases">
        <authorList>
            <person name="Stapleton M."/>
            <person name="Carlson J."/>
            <person name="Chavez C."/>
            <person name="Frise E."/>
            <person name="George R."/>
            <person name="Pacleb J."/>
            <person name="Park S."/>
            <person name="Wan K."/>
            <person name="Yu C."/>
            <person name="Celniker S."/>
        </authorList>
    </citation>
    <scope>NUCLEOTIDE SEQUENCE [LARGE SCALE MRNA]</scope>
</reference>
<reference evidence="3" key="4">
    <citation type="journal article" date="2011" name="Biochem. Biophys. Res. Commun.">
        <title>Identification of the endogenous cysteine-rich peptide trissin, a ligand for an orphan G protein-coupled receptor in Drosophila.</title>
        <authorList>
            <person name="Ida T."/>
            <person name="Takahashi T."/>
            <person name="Tominaga H."/>
            <person name="Sato T."/>
            <person name="Kume K."/>
            <person name="Yoshizawa-Kumagaye K."/>
            <person name="Nishio H."/>
            <person name="Kato J."/>
            <person name="Murakami N."/>
            <person name="Miyazato M."/>
            <person name="Kangawa K."/>
            <person name="Kojima M."/>
        </authorList>
    </citation>
    <scope>PROTEIN SEQUENCE OF 30-55</scope>
    <scope>FUNCTION</scope>
    <scope>MASS SPECTROMETRY</scope>
    <scope>DISULFIDE BONDS</scope>
</reference>
<protein>
    <recommendedName>
        <fullName evidence="2">Trissin</fullName>
    </recommendedName>
</protein>
<dbReference type="EMBL" id="AE014297">
    <property type="protein sequence ID" value="AAF55203.2"/>
    <property type="molecule type" value="Genomic_DNA"/>
</dbReference>
<dbReference type="EMBL" id="BT022438">
    <property type="protein sequence ID" value="AAY54854.1"/>
    <property type="molecule type" value="mRNA"/>
</dbReference>
<dbReference type="EMBL" id="BT022461">
    <property type="protein sequence ID" value="AAY54877.1"/>
    <property type="molecule type" value="mRNA"/>
</dbReference>
<dbReference type="RefSeq" id="NP_650471.2">
    <property type="nucleotide sequence ID" value="NM_142214.2"/>
</dbReference>
<dbReference type="FunCoup" id="Q4V645">
    <property type="interactions" value="62"/>
</dbReference>
<dbReference type="STRING" id="7227.FBpp0289411"/>
<dbReference type="PaxDb" id="7227-FBpp0289411"/>
<dbReference type="DNASU" id="41890"/>
<dbReference type="EnsemblMetazoa" id="FBtr0300174">
    <property type="protein sequence ID" value="FBpp0289411"/>
    <property type="gene ID" value="FBgn0038343"/>
</dbReference>
<dbReference type="GeneID" id="41890"/>
<dbReference type="KEGG" id="dme:Dmel_CG14871"/>
<dbReference type="UCSC" id="CG14871-RB">
    <property type="organism name" value="d. melanogaster"/>
</dbReference>
<dbReference type="AGR" id="FB:FBgn0038343"/>
<dbReference type="CTD" id="41890"/>
<dbReference type="FlyBase" id="FBgn0038343">
    <property type="gene designation" value="Trissin"/>
</dbReference>
<dbReference type="VEuPathDB" id="VectorBase:FBgn0038343"/>
<dbReference type="eggNOG" id="ENOG502SFTC">
    <property type="taxonomic scope" value="Eukaryota"/>
</dbReference>
<dbReference type="HOGENOM" id="CLU_175791_0_0_1"/>
<dbReference type="InParanoid" id="Q4V645"/>
<dbReference type="OMA" id="LRERRHN"/>
<dbReference type="OrthoDB" id="8195871at2759"/>
<dbReference type="PhylomeDB" id="Q4V645"/>
<dbReference type="BioGRID-ORCS" id="41890">
    <property type="hits" value="0 hits in 1 CRISPR screen"/>
</dbReference>
<dbReference type="GenomeRNAi" id="41890"/>
<dbReference type="PRO" id="PR:Q4V645"/>
<dbReference type="Proteomes" id="UP000000803">
    <property type="component" value="Chromosome 3R"/>
</dbReference>
<dbReference type="Bgee" id="FBgn0038343">
    <property type="expression patterns" value="Expressed in brain and 13 other cell types or tissues"/>
</dbReference>
<dbReference type="ExpressionAtlas" id="Q4V645">
    <property type="expression patterns" value="baseline and differential"/>
</dbReference>
<dbReference type="GO" id="GO:0005615">
    <property type="term" value="C:extracellular space"/>
    <property type="evidence" value="ECO:0000255"/>
    <property type="project" value="FlyBase"/>
</dbReference>
<dbReference type="GO" id="GO:0001664">
    <property type="term" value="F:G protein-coupled receptor binding"/>
    <property type="evidence" value="ECO:0000353"/>
    <property type="project" value="FlyBase"/>
</dbReference>
<dbReference type="GO" id="GO:0007186">
    <property type="term" value="P:G protein-coupled receptor signaling pathway"/>
    <property type="evidence" value="ECO:0000314"/>
    <property type="project" value="FlyBase"/>
</dbReference>
<proteinExistence type="evidence at protein level"/>